<evidence type="ECO:0000250" key="1"/>
<evidence type="ECO:0000250" key="2">
    <source>
        <dbReference type="UniProtKB" id="P01584"/>
    </source>
</evidence>
<evidence type="ECO:0000250" key="3">
    <source>
        <dbReference type="UniProtKB" id="P10749"/>
    </source>
</evidence>
<evidence type="ECO:0000305" key="4"/>
<protein>
    <recommendedName>
        <fullName>Interleukin-1 beta</fullName>
        <shortName>IL-1 beta</shortName>
    </recommendedName>
</protein>
<name>IL1B_SHEEP</name>
<sequence length="266" mass="30717">MATVPEPINEVMAYYSDENELLFEVDGPKQMKSCTQHLDLGSMGDGNIQLQISHQLYNKSFRQVVSVIVAMEKLRSRAYEHVFRDDDLRSILSFIFEEEPVIFETSSDELLCDAAVQSVKCKLQDREQKSLVLDSPCVLKALHLPSQEMSREVVFCMSFVQGEERDNKIPVALGIRDKNLYLSCVKKGDTPTLQLEEVDPKVYPKRNMEKRFVFYKTEIKNTVEFESVLYPNWYISTSQIEEKPVFLGRFRGGQDITDFRMETLSP</sequence>
<keyword id="KW-0202">Cytokine</keyword>
<keyword id="KW-0963">Cytoplasm</keyword>
<keyword id="KW-0395">Inflammatory response</keyword>
<keyword id="KW-0458">Lysosome</keyword>
<keyword id="KW-0497">Mitogen</keyword>
<keyword id="KW-0666">Pyrogen</keyword>
<keyword id="KW-1185">Reference proteome</keyword>
<keyword id="KW-0964">Secreted</keyword>
<organism>
    <name type="scientific">Ovis aries</name>
    <name type="common">Sheep</name>
    <dbReference type="NCBI Taxonomy" id="9940"/>
    <lineage>
        <taxon>Eukaryota</taxon>
        <taxon>Metazoa</taxon>
        <taxon>Chordata</taxon>
        <taxon>Craniata</taxon>
        <taxon>Vertebrata</taxon>
        <taxon>Euteleostomi</taxon>
        <taxon>Mammalia</taxon>
        <taxon>Eutheria</taxon>
        <taxon>Laurasiatheria</taxon>
        <taxon>Artiodactyla</taxon>
        <taxon>Ruminantia</taxon>
        <taxon>Pecora</taxon>
        <taxon>Bovidae</taxon>
        <taxon>Caprinae</taxon>
        <taxon>Ovis</taxon>
    </lineage>
</organism>
<comment type="function">
    <text evidence="2">Potent pro-inflammatory cytokine. Initially discovered as the major endogenous pyrogen, induces prostaglandin synthesis, neutrophil influx and activation, T-cell activation and cytokine production, B-cell activation and antibody production, and fibroblast proliferation and collagen production. Promotes Th17 differentiation of T-cells. Synergizes with IL12/interleukin-12 to induce IFNG synthesis from T-helper 1 (Th1) cells. Plays a role in angiogenesis by inducing VEGF production synergistically with TNF and IL6. Involved in transduction of inflammation downstream of pyroptosis: its mature form is specifically released in the extracellular milieu by passing through the gasdermin-D (GSDMD) pore.</text>
</comment>
<comment type="subunit">
    <text evidence="2">Monomer. In its precursor form, weakly interacts with full-length MEFV; the mature cytokine does not interact at all. Interacts with integrins ITGAV:ITGBV and ITGA5:ITGB1; integrin-binding is required for IL1B signaling. Interacts with cargo receptor TMED10; the interaction is direct and is required for the secretion of IL1B mature form. Interacts with HSP90AB1; the interaction facilitates cargo translocation into the ERGIC. Interacts with HSP90B1; the interaction facilitates cargo translocation into the ERGIC.</text>
</comment>
<comment type="subcellular location">
    <subcellularLocation>
        <location evidence="2">Cytoplasm</location>
        <location evidence="2">Cytosol</location>
    </subcellularLocation>
    <subcellularLocation>
        <location evidence="2">Secreted</location>
    </subcellularLocation>
    <subcellularLocation>
        <location evidence="2">Lysosome</location>
    </subcellularLocation>
    <subcellularLocation>
        <location evidence="3">Secreted</location>
        <location evidence="3">Extracellular exosome</location>
    </subcellularLocation>
    <text evidence="2">The precursor is cytosolic. In response to inflammasome-activating signals, such as ATP for NLRP3 inflammasome or bacterial flagellin for NLRC4 inflammasome, cleaved and secreted. Mature form is secreted and released in the extracellular milieu by passing through the gasdermin-D (GSDMD) pore. In contrast, the precursor form is not released, due to the presence of an acidic region that is proteolytically removed by CASP1 during maturation. The secretion is dependent on protein unfolding and facilitated by the cargo receptor TMED10.</text>
</comment>
<comment type="miscellaneous">
    <text evidence="1">IL1B production occurs in 2 steps, each being controlled by different stimuli. First, inflammatory signals, such as LPS, stimulate the synthesis and promote the accumulation of cytosolic stores of pro-IL1B (priming). Then additional signals are required for inflammasome assembly, leading to CASP1 activation, pro-IL1B processing and eventually secretion of the active cytokine. IL1B processing and secretion are temporarily associated.</text>
</comment>
<comment type="similarity">
    <text evidence="4">Belongs to the IL-1 family.</text>
</comment>
<feature type="propeptide" id="PRO_0000015319">
    <location>
        <begin position="1"/>
        <end position="113"/>
    </location>
</feature>
<feature type="chain" id="PRO_0000015320" description="Interleukin-1 beta">
    <location>
        <begin position="114"/>
        <end position="266"/>
    </location>
</feature>
<feature type="site" description="Important for interaction with integrin" evidence="2">
    <location>
        <position position="168"/>
    </location>
</feature>
<feature type="site" description="Important for interaction with integrin" evidence="2">
    <location>
        <position position="178"/>
    </location>
</feature>
<feature type="site" description="Important for interaction with integrin" evidence="2">
    <location>
        <position position="187"/>
    </location>
</feature>
<feature type="site" description="Important for interaction with integrin" evidence="2">
    <location>
        <position position="201"/>
    </location>
</feature>
<feature type="sequence conflict" description="In Ref. 1; CAA38566." evidence="4" ref="1">
    <original>Y</original>
    <variation>C</variation>
    <location>
        <position position="14"/>
    </location>
</feature>
<feature type="sequence conflict" description="In Ref. 1; CAA38566." evidence="4" ref="1">
    <original>Q</original>
    <variation>K</variation>
    <location>
        <position position="55"/>
    </location>
</feature>
<feature type="sequence conflict" description="In Ref. 1; CAA38566." evidence="4" ref="1">
    <original>V</original>
    <variation>A</variation>
    <location>
        <position position="64"/>
    </location>
</feature>
<feature type="sequence conflict" description="In Ref. 1 and 3." evidence="4" ref="1 3">
    <original>P</original>
    <variation>L</variation>
    <location>
        <position position="145"/>
    </location>
</feature>
<gene>
    <name type="primary">IL1B</name>
</gene>
<accession>P21621</accession>
<proteinExistence type="evidence at transcript level"/>
<dbReference type="EMBL" id="X54796">
    <property type="protein sequence ID" value="CAA38566.1"/>
    <property type="molecule type" value="mRNA"/>
</dbReference>
<dbReference type="EMBL" id="X56972">
    <property type="protein sequence ID" value="CAA40293.1"/>
    <property type="molecule type" value="mRNA"/>
</dbReference>
<dbReference type="PIR" id="S23010">
    <property type="entry name" value="S23010"/>
</dbReference>
<dbReference type="RefSeq" id="NP_001009465.2">
    <property type="nucleotide sequence ID" value="NM_001009465.2"/>
</dbReference>
<dbReference type="SMR" id="P21621"/>
<dbReference type="STRING" id="9940.ENSOARP00000022427"/>
<dbReference type="PaxDb" id="9940-ENSOARP00000022427"/>
<dbReference type="GeneID" id="443539"/>
<dbReference type="KEGG" id="oas:443539"/>
<dbReference type="CTD" id="3553"/>
<dbReference type="eggNOG" id="ENOG502S3E9">
    <property type="taxonomic scope" value="Eukaryota"/>
</dbReference>
<dbReference type="OrthoDB" id="9449069at2759"/>
<dbReference type="Proteomes" id="UP000002356">
    <property type="component" value="Unplaced"/>
</dbReference>
<dbReference type="GO" id="GO:0005829">
    <property type="term" value="C:cytosol"/>
    <property type="evidence" value="ECO:0007669"/>
    <property type="project" value="UniProtKB-SubCell"/>
</dbReference>
<dbReference type="GO" id="GO:0005615">
    <property type="term" value="C:extracellular space"/>
    <property type="evidence" value="ECO:0000314"/>
    <property type="project" value="AgBase"/>
</dbReference>
<dbReference type="GO" id="GO:0005764">
    <property type="term" value="C:lysosome"/>
    <property type="evidence" value="ECO:0007669"/>
    <property type="project" value="UniProtKB-SubCell"/>
</dbReference>
<dbReference type="GO" id="GO:0005125">
    <property type="term" value="F:cytokine activity"/>
    <property type="evidence" value="ECO:0007669"/>
    <property type="project" value="UniProtKB-KW"/>
</dbReference>
<dbReference type="GO" id="GO:0005178">
    <property type="term" value="F:integrin binding"/>
    <property type="evidence" value="ECO:0000250"/>
    <property type="project" value="UniProtKB"/>
</dbReference>
<dbReference type="GO" id="GO:0005149">
    <property type="term" value="F:interleukin-1 receptor binding"/>
    <property type="evidence" value="ECO:0007669"/>
    <property type="project" value="InterPro"/>
</dbReference>
<dbReference type="GO" id="GO:0071222">
    <property type="term" value="P:cellular response to lipopolysaccharide"/>
    <property type="evidence" value="ECO:0007669"/>
    <property type="project" value="TreeGrafter"/>
</dbReference>
<dbReference type="GO" id="GO:0019221">
    <property type="term" value="P:cytokine-mediated signaling pathway"/>
    <property type="evidence" value="ECO:0007669"/>
    <property type="project" value="TreeGrafter"/>
</dbReference>
<dbReference type="GO" id="GO:0042742">
    <property type="term" value="P:defense response to bacterium"/>
    <property type="evidence" value="ECO:0000304"/>
    <property type="project" value="AgBase"/>
</dbReference>
<dbReference type="GO" id="GO:0001660">
    <property type="term" value="P:fever generation"/>
    <property type="evidence" value="ECO:0007669"/>
    <property type="project" value="UniProtKB-KW"/>
</dbReference>
<dbReference type="GO" id="GO:0006955">
    <property type="term" value="P:immune response"/>
    <property type="evidence" value="ECO:0007669"/>
    <property type="project" value="InterPro"/>
</dbReference>
<dbReference type="GO" id="GO:0051781">
    <property type="term" value="P:positive regulation of cell division"/>
    <property type="evidence" value="ECO:0007669"/>
    <property type="project" value="UniProtKB-KW"/>
</dbReference>
<dbReference type="GO" id="GO:0033092">
    <property type="term" value="P:positive regulation of immature T cell proliferation in thymus"/>
    <property type="evidence" value="ECO:0007669"/>
    <property type="project" value="TreeGrafter"/>
</dbReference>
<dbReference type="GO" id="GO:2000556">
    <property type="term" value="P:positive regulation of T-helper 1 cell cytokine production"/>
    <property type="evidence" value="ECO:0000250"/>
    <property type="project" value="UniProtKB"/>
</dbReference>
<dbReference type="GO" id="GO:0032729">
    <property type="term" value="P:positive regulation of type II interferon production"/>
    <property type="evidence" value="ECO:0000250"/>
    <property type="project" value="UniProtKB"/>
</dbReference>
<dbReference type="GO" id="GO:0050691">
    <property type="term" value="P:regulation of defense response to virus by host"/>
    <property type="evidence" value="ECO:0000304"/>
    <property type="project" value="AgBase"/>
</dbReference>
<dbReference type="GO" id="GO:0010573">
    <property type="term" value="P:vascular endothelial growth factor production"/>
    <property type="evidence" value="ECO:0000250"/>
    <property type="project" value="UniProtKB"/>
</dbReference>
<dbReference type="CDD" id="cd23296">
    <property type="entry name" value="beta-trefoil_IL1B"/>
    <property type="match status" value="1"/>
</dbReference>
<dbReference type="FunFam" id="2.80.10.50:FF:000027">
    <property type="entry name" value="Interleukin-1 beta"/>
    <property type="match status" value="1"/>
</dbReference>
<dbReference type="Gene3D" id="2.80.10.50">
    <property type="match status" value="1"/>
</dbReference>
<dbReference type="InterPro" id="IPR020877">
    <property type="entry name" value="IL-1_CS"/>
</dbReference>
<dbReference type="InterPro" id="IPR000975">
    <property type="entry name" value="IL-1_fam"/>
</dbReference>
<dbReference type="InterPro" id="IPR003502">
    <property type="entry name" value="IL-1_propep"/>
</dbReference>
<dbReference type="InterPro" id="IPR008996">
    <property type="entry name" value="IL1/FGF"/>
</dbReference>
<dbReference type="PANTHER" id="PTHR10078:SF30">
    <property type="entry name" value="INTERLEUKIN-1 BETA"/>
    <property type="match status" value="1"/>
</dbReference>
<dbReference type="PANTHER" id="PTHR10078">
    <property type="entry name" value="INTERLEUKIN-1 FAMILY MEMBER"/>
    <property type="match status" value="1"/>
</dbReference>
<dbReference type="Pfam" id="PF00340">
    <property type="entry name" value="IL1"/>
    <property type="match status" value="1"/>
</dbReference>
<dbReference type="Pfam" id="PF02394">
    <property type="entry name" value="IL1_propep"/>
    <property type="match status" value="1"/>
</dbReference>
<dbReference type="PRINTS" id="PR00262">
    <property type="entry name" value="IL1HBGF"/>
</dbReference>
<dbReference type="PRINTS" id="PR00264">
    <property type="entry name" value="INTERLEUKIN1"/>
</dbReference>
<dbReference type="PRINTS" id="PR01359">
    <property type="entry name" value="INTRLEUKIN1B"/>
</dbReference>
<dbReference type="PRINTS" id="PR01357">
    <property type="entry name" value="INTRLEUKN1AB"/>
</dbReference>
<dbReference type="SMART" id="SM00125">
    <property type="entry name" value="IL1"/>
    <property type="match status" value="1"/>
</dbReference>
<dbReference type="SUPFAM" id="SSF50353">
    <property type="entry name" value="Cytokine"/>
    <property type="match status" value="1"/>
</dbReference>
<dbReference type="PROSITE" id="PS00253">
    <property type="entry name" value="INTERLEUKIN_1"/>
    <property type="match status" value="1"/>
</dbReference>
<reference key="1">
    <citation type="journal article" date="1990" name="Nucleic Acids Res.">
        <title>Nucleotide sequence of ovine interleukin-1 beta.</title>
        <authorList>
            <person name="Fiskerstrand C."/>
            <person name="Sargan D."/>
        </authorList>
    </citation>
    <scope>NUCLEOTIDE SEQUENCE [MRNA]</scope>
    <source>
        <tissue>Alveolar macrophage</tissue>
    </source>
</reference>
<reference key="2">
    <citation type="journal article" date="1991" name="DNA Seq.">
        <title>Nucleotide sequence of ovine macrophage interleukin-1 beta cDNA.</title>
        <authorList>
            <person name="Seow H.F."/>
            <person name="Rothel J.S."/>
            <person name="David M.J."/>
            <person name="Wood P.R."/>
        </authorList>
    </citation>
    <scope>NUCLEOTIDE SEQUENCE [MRNA]</scope>
</reference>
<reference key="3">
    <citation type="journal article" date="1991" name="Immunology">
        <title>Molecular cloning and characterization of ovine IL-1 alpha and IL-1 beta.</title>
        <authorList>
            <person name="Andrews A.E."/>
            <person name="Barcham G.J."/>
            <person name="Brandon M.R."/>
            <person name="Nash A.D."/>
        </authorList>
    </citation>
    <scope>NUCLEOTIDE SEQUENCE [MRNA]</scope>
</reference>